<feature type="signal peptide" evidence="1">
    <location>
        <begin position="1"/>
        <end position="29"/>
    </location>
</feature>
<feature type="chain" id="PRO_0000032963" description="Prolactin-3D1">
    <location>
        <begin position="30"/>
        <end position="230"/>
    </location>
</feature>
<feature type="glycosylation site" description="N-linked (GlcNAc...) asparagine" evidence="2">
    <location>
        <position position="109"/>
    </location>
</feature>
<feature type="glycosylation site" description="N-linked (GlcNAc...) asparagine" evidence="2">
    <location>
        <position position="158"/>
    </location>
</feature>
<feature type="disulfide bond" evidence="1">
    <location>
        <begin position="81"/>
        <end position="200"/>
    </location>
</feature>
<feature type="disulfide bond" evidence="1">
    <location>
        <begin position="217"/>
        <end position="225"/>
    </location>
</feature>
<evidence type="ECO:0000250" key="1"/>
<evidence type="ECO:0000255" key="2"/>
<evidence type="ECO:0000305" key="3"/>
<comment type="subcellular location">
    <subcellularLocation>
        <location>Secreted</location>
    </subcellularLocation>
</comment>
<comment type="developmental stage">
    <text>Placental lactogen I is expressed in mid-pregnancy, while placental lactogen II is expressed throughout the later half of pregnancy.</text>
</comment>
<comment type="similarity">
    <text evidence="3">Belongs to the somatotropin/prolactin family.</text>
</comment>
<sequence length="230" mass="26324">MQLTLTLSRASGMQLFLLVSSLLLWEKVASKPTAIVSTDDLYHCLVEQSHNTFIMAADVYREFDINFAKRSWMKDRILPLCHTASIHTPENLEEVHEMKTEDFLNSIINVSVSWKEPLKHLVVCSDCSSGASVSMGKKAVDMKDKNLIILEGLQTLYNRTQAKVEENFENFDYPAWSGLKDLDSSDEEHHLFAICNLCRCVKRDIHKIDTYLKVLRCRVVFKNECGVSTF</sequence>
<protein>
    <recommendedName>
        <fullName>Prolactin-3D1</fullName>
    </recommendedName>
    <alternativeName>
        <fullName>Chorionic somatomammotropin hormone 1</fullName>
    </alternativeName>
    <alternativeName>
        <fullName>Placental lactogen I</fullName>
        <shortName>PL-I</shortName>
    </alternativeName>
</protein>
<reference key="1">
    <citation type="journal article" date="1990" name="Endocrinology">
        <title>Molecular cloning and expression of rat placental lactogen-I complementary deoxyribonucleic acid.</title>
        <authorList>
            <person name="Robertson M.C."/>
            <person name="Croze F."/>
            <person name="Schroedter I.C."/>
            <person name="Friesen H.G."/>
        </authorList>
    </citation>
    <scope>NUCLEOTIDE SEQUENCE [MRNA]</scope>
</reference>
<accession>P21702</accession>
<gene>
    <name type="primary">Prl3d1</name>
    <name type="synonym">Csh1</name>
    <name type="synonym">Pl1</name>
</gene>
<organism>
    <name type="scientific">Rattus norvegicus</name>
    <name type="common">Rat</name>
    <dbReference type="NCBI Taxonomy" id="10116"/>
    <lineage>
        <taxon>Eukaryota</taxon>
        <taxon>Metazoa</taxon>
        <taxon>Chordata</taxon>
        <taxon>Craniata</taxon>
        <taxon>Vertebrata</taxon>
        <taxon>Euteleostomi</taxon>
        <taxon>Mammalia</taxon>
        <taxon>Eutheria</taxon>
        <taxon>Euarchontoglires</taxon>
        <taxon>Glires</taxon>
        <taxon>Rodentia</taxon>
        <taxon>Myomorpha</taxon>
        <taxon>Muroidea</taxon>
        <taxon>Muridae</taxon>
        <taxon>Murinae</taxon>
        <taxon>Rattus</taxon>
    </lineage>
</organism>
<keyword id="KW-1015">Disulfide bond</keyword>
<keyword id="KW-0325">Glycoprotein</keyword>
<keyword id="KW-0372">Hormone</keyword>
<keyword id="KW-1185">Reference proteome</keyword>
<keyword id="KW-0964">Secreted</keyword>
<keyword id="KW-0732">Signal</keyword>
<proteinExistence type="evidence at transcript level"/>
<name>PR3D1_RAT</name>
<dbReference type="EMBL" id="M55269">
    <property type="protein sequence ID" value="AAA41506.1"/>
    <property type="molecule type" value="mRNA"/>
</dbReference>
<dbReference type="PIR" id="A37399">
    <property type="entry name" value="A37399"/>
</dbReference>
<dbReference type="SMR" id="P21702"/>
<dbReference type="STRING" id="10116.ENSRNOP00000049253"/>
<dbReference type="GlyCosmos" id="P21702">
    <property type="glycosylation" value="2 sites, No reported glycans"/>
</dbReference>
<dbReference type="GlyGen" id="P21702">
    <property type="glycosylation" value="2 sites"/>
</dbReference>
<dbReference type="PhosphoSitePlus" id="P21702"/>
<dbReference type="PaxDb" id="10116-ENSRNOP00000049253"/>
<dbReference type="UCSC" id="RGD:2427">
    <property type="organism name" value="rat"/>
</dbReference>
<dbReference type="AGR" id="RGD:1582762"/>
<dbReference type="RGD" id="1582762">
    <property type="gene designation" value="Prl3d1"/>
</dbReference>
<dbReference type="eggNOG" id="ENOG502QYU3">
    <property type="taxonomic scope" value="Eukaryota"/>
</dbReference>
<dbReference type="InParanoid" id="P21702"/>
<dbReference type="PhylomeDB" id="P21702"/>
<dbReference type="PRO" id="PR:P21702"/>
<dbReference type="Proteomes" id="UP000002494">
    <property type="component" value="Unplaced"/>
</dbReference>
<dbReference type="GO" id="GO:0005576">
    <property type="term" value="C:extracellular region"/>
    <property type="evidence" value="ECO:0007669"/>
    <property type="project" value="UniProtKB-SubCell"/>
</dbReference>
<dbReference type="GO" id="GO:0005179">
    <property type="term" value="F:hormone activity"/>
    <property type="evidence" value="ECO:0007669"/>
    <property type="project" value="UniProtKB-KW"/>
</dbReference>
<dbReference type="CDD" id="cd10288">
    <property type="entry name" value="prolactin_like"/>
    <property type="match status" value="1"/>
</dbReference>
<dbReference type="FunFam" id="1.20.1250.10:FF:000043">
    <property type="entry name" value="Growth hormone d5"/>
    <property type="match status" value="1"/>
</dbReference>
<dbReference type="Gene3D" id="1.20.1250.10">
    <property type="match status" value="1"/>
</dbReference>
<dbReference type="InterPro" id="IPR009079">
    <property type="entry name" value="4_helix_cytokine-like_core"/>
</dbReference>
<dbReference type="InterPro" id="IPR001400">
    <property type="entry name" value="Somatotropin/Prolactin"/>
</dbReference>
<dbReference type="InterPro" id="IPR018116">
    <property type="entry name" value="Somatotropin_CS"/>
</dbReference>
<dbReference type="PANTHER" id="PTHR11417:SF31">
    <property type="entry name" value="GROWTH HORMONE D5-RELATED"/>
    <property type="match status" value="1"/>
</dbReference>
<dbReference type="PANTHER" id="PTHR11417">
    <property type="entry name" value="SOMATOTROPIN,PROLACTIN"/>
    <property type="match status" value="1"/>
</dbReference>
<dbReference type="Pfam" id="PF00103">
    <property type="entry name" value="Hormone_1"/>
    <property type="match status" value="1"/>
</dbReference>
<dbReference type="PRINTS" id="PR00836">
    <property type="entry name" value="SOMATOTROPIN"/>
</dbReference>
<dbReference type="SUPFAM" id="SSF47266">
    <property type="entry name" value="4-helical cytokines"/>
    <property type="match status" value="1"/>
</dbReference>
<dbReference type="PROSITE" id="PS00266">
    <property type="entry name" value="SOMATOTROPIN_1"/>
    <property type="match status" value="1"/>
</dbReference>
<dbReference type="PROSITE" id="PS00338">
    <property type="entry name" value="SOMATOTROPIN_2"/>
    <property type="match status" value="1"/>
</dbReference>